<accession>Q7UNE3</accession>
<sequence length="522" mass="58223">MNPQLASTILYCLFFFFLGIAAVLAFIQRQAVKRRERLDAEAEAVLESARREAETRGNQIIVDAREKALAIKAEADREVAAMRETEQIRDRKLDAREDQLASGQESLRKAQRGLESSQTRLAAQMRNLTEQRAELDRLVQESQRALEKVSGMTQEEAAEKLMQSLRQDLEHEIGSTVLKHQRELGRRVDAQAREMLLTAMQRYASVHTADTTTSTVGVPTDDMKGRIIGREGRNIRAFEKATGVDLIIDDTPGVVVVSGFDPVRREVARMSLEKLIADGRIHPSKIEETVEQAGKEIQAFILQKGQEAAGEVNVSGLHDRVIEMLGRLHFRTSYSQNVLRHSVEVAFLAGMMAEMIGLDGDLARRCGLLHDIGKAADHELEGGHPKIGADLLRRSKENDEVVHAAKGHHDEIVTEFPYTMLVATADACSASRPGARRESLERYVKRMEELESIAQRFDGVQQAYAISAGRELRVMVGSQQVSDERAAAICRDIASTFEKELTYPGEIKVTVVREARFTNTAK</sequence>
<dbReference type="EC" id="3.1.-.-" evidence="1"/>
<dbReference type="EMBL" id="BX294146">
    <property type="protein sequence ID" value="CAD75476.1"/>
    <property type="molecule type" value="Genomic_DNA"/>
</dbReference>
<dbReference type="RefSeq" id="NP_867929.1">
    <property type="nucleotide sequence ID" value="NC_005027.1"/>
</dbReference>
<dbReference type="RefSeq" id="WP_007325643.1">
    <property type="nucleotide sequence ID" value="NC_005027.1"/>
</dbReference>
<dbReference type="SMR" id="Q7UNE3"/>
<dbReference type="STRING" id="243090.RB7627"/>
<dbReference type="EnsemblBacteria" id="CAD75476">
    <property type="protein sequence ID" value="CAD75476"/>
    <property type="gene ID" value="RB7627"/>
</dbReference>
<dbReference type="KEGG" id="rba:RB7627"/>
<dbReference type="PATRIC" id="fig|243090.15.peg.3686"/>
<dbReference type="eggNOG" id="COG1418">
    <property type="taxonomic scope" value="Bacteria"/>
</dbReference>
<dbReference type="HOGENOM" id="CLU_028328_1_0_0"/>
<dbReference type="InParanoid" id="Q7UNE3"/>
<dbReference type="OrthoDB" id="9803205at2"/>
<dbReference type="Proteomes" id="UP000001025">
    <property type="component" value="Chromosome"/>
</dbReference>
<dbReference type="GO" id="GO:0005886">
    <property type="term" value="C:plasma membrane"/>
    <property type="evidence" value="ECO:0007669"/>
    <property type="project" value="UniProtKB-SubCell"/>
</dbReference>
<dbReference type="GO" id="GO:0003723">
    <property type="term" value="F:RNA binding"/>
    <property type="evidence" value="ECO:0007669"/>
    <property type="project" value="UniProtKB-UniRule"/>
</dbReference>
<dbReference type="GO" id="GO:0004521">
    <property type="term" value="F:RNA endonuclease activity"/>
    <property type="evidence" value="ECO:0007669"/>
    <property type="project" value="UniProtKB-UniRule"/>
</dbReference>
<dbReference type="GO" id="GO:0006402">
    <property type="term" value="P:mRNA catabolic process"/>
    <property type="evidence" value="ECO:0007669"/>
    <property type="project" value="UniProtKB-UniRule"/>
</dbReference>
<dbReference type="CDD" id="cd00077">
    <property type="entry name" value="HDc"/>
    <property type="match status" value="1"/>
</dbReference>
<dbReference type="CDD" id="cd22431">
    <property type="entry name" value="KH-I_RNaseY"/>
    <property type="match status" value="1"/>
</dbReference>
<dbReference type="FunFam" id="1.10.3210.10:FF:000022">
    <property type="entry name" value="Ribonuclease Y"/>
    <property type="match status" value="1"/>
</dbReference>
<dbReference type="Gene3D" id="1.10.3210.10">
    <property type="entry name" value="Hypothetical protein af1432"/>
    <property type="match status" value="1"/>
</dbReference>
<dbReference type="Gene3D" id="3.30.1370.10">
    <property type="entry name" value="K Homology domain, type 1"/>
    <property type="match status" value="1"/>
</dbReference>
<dbReference type="HAMAP" id="MF_00335">
    <property type="entry name" value="RNase_Y"/>
    <property type="match status" value="1"/>
</dbReference>
<dbReference type="InterPro" id="IPR003607">
    <property type="entry name" value="HD/PDEase_dom"/>
</dbReference>
<dbReference type="InterPro" id="IPR006674">
    <property type="entry name" value="HD_domain"/>
</dbReference>
<dbReference type="InterPro" id="IPR006675">
    <property type="entry name" value="HDIG_dom"/>
</dbReference>
<dbReference type="InterPro" id="IPR004087">
    <property type="entry name" value="KH_dom"/>
</dbReference>
<dbReference type="InterPro" id="IPR004088">
    <property type="entry name" value="KH_dom_type_1"/>
</dbReference>
<dbReference type="InterPro" id="IPR036612">
    <property type="entry name" value="KH_dom_type_1_sf"/>
</dbReference>
<dbReference type="InterPro" id="IPR017705">
    <property type="entry name" value="Ribonuclease_Y"/>
</dbReference>
<dbReference type="InterPro" id="IPR022711">
    <property type="entry name" value="RNase_Y_N"/>
</dbReference>
<dbReference type="NCBIfam" id="TIGR00277">
    <property type="entry name" value="HDIG"/>
    <property type="match status" value="1"/>
</dbReference>
<dbReference type="NCBIfam" id="TIGR03319">
    <property type="entry name" value="RNase_Y"/>
    <property type="match status" value="1"/>
</dbReference>
<dbReference type="PANTHER" id="PTHR12826">
    <property type="entry name" value="RIBONUCLEASE Y"/>
    <property type="match status" value="1"/>
</dbReference>
<dbReference type="PANTHER" id="PTHR12826:SF15">
    <property type="entry name" value="RIBONUCLEASE Y"/>
    <property type="match status" value="1"/>
</dbReference>
<dbReference type="Pfam" id="PF01966">
    <property type="entry name" value="HD"/>
    <property type="match status" value="1"/>
</dbReference>
<dbReference type="Pfam" id="PF00013">
    <property type="entry name" value="KH_1"/>
    <property type="match status" value="1"/>
</dbReference>
<dbReference type="Pfam" id="PF12072">
    <property type="entry name" value="RNase_Y_N"/>
    <property type="match status" value="1"/>
</dbReference>
<dbReference type="SMART" id="SM00471">
    <property type="entry name" value="HDc"/>
    <property type="match status" value="1"/>
</dbReference>
<dbReference type="SMART" id="SM00322">
    <property type="entry name" value="KH"/>
    <property type="match status" value="1"/>
</dbReference>
<dbReference type="SUPFAM" id="SSF54791">
    <property type="entry name" value="Eukaryotic type KH-domain (KH-domain type I)"/>
    <property type="match status" value="1"/>
</dbReference>
<dbReference type="SUPFAM" id="SSF109604">
    <property type="entry name" value="HD-domain/PDEase-like"/>
    <property type="match status" value="1"/>
</dbReference>
<dbReference type="PROSITE" id="PS51831">
    <property type="entry name" value="HD"/>
    <property type="match status" value="1"/>
</dbReference>
<dbReference type="PROSITE" id="PS50084">
    <property type="entry name" value="KH_TYPE_1"/>
    <property type="match status" value="1"/>
</dbReference>
<comment type="function">
    <text evidence="1">Endoribonuclease that initiates mRNA decay.</text>
</comment>
<comment type="subcellular location">
    <subcellularLocation>
        <location evidence="1">Cell membrane</location>
        <topology evidence="1">Single-pass membrane protein</topology>
    </subcellularLocation>
</comment>
<comment type="similarity">
    <text evidence="1">Belongs to the RNase Y family.</text>
</comment>
<organism>
    <name type="scientific">Rhodopirellula baltica (strain DSM 10527 / NCIMB 13988 / SH1)</name>
    <dbReference type="NCBI Taxonomy" id="243090"/>
    <lineage>
        <taxon>Bacteria</taxon>
        <taxon>Pseudomonadati</taxon>
        <taxon>Planctomycetota</taxon>
        <taxon>Planctomycetia</taxon>
        <taxon>Pirellulales</taxon>
        <taxon>Pirellulaceae</taxon>
        <taxon>Rhodopirellula</taxon>
    </lineage>
</organism>
<proteinExistence type="inferred from homology"/>
<protein>
    <recommendedName>
        <fullName evidence="1">Ribonuclease Y</fullName>
        <shortName evidence="1">RNase Y</shortName>
        <ecNumber evidence="1">3.1.-.-</ecNumber>
    </recommendedName>
</protein>
<keyword id="KW-1003">Cell membrane</keyword>
<keyword id="KW-0255">Endonuclease</keyword>
<keyword id="KW-0378">Hydrolase</keyword>
<keyword id="KW-0472">Membrane</keyword>
<keyword id="KW-0540">Nuclease</keyword>
<keyword id="KW-1185">Reference proteome</keyword>
<keyword id="KW-0694">RNA-binding</keyword>
<keyword id="KW-0812">Transmembrane</keyword>
<keyword id="KW-1133">Transmembrane helix</keyword>
<name>RNY_RHOBA</name>
<feature type="chain" id="PRO_0000226298" description="Ribonuclease Y">
    <location>
        <begin position="1"/>
        <end position="522"/>
    </location>
</feature>
<feature type="transmembrane region" description="Helical" evidence="1">
    <location>
        <begin position="7"/>
        <end position="27"/>
    </location>
</feature>
<feature type="domain" description="KH" evidence="1">
    <location>
        <begin position="212"/>
        <end position="272"/>
    </location>
</feature>
<feature type="domain" description="HD" evidence="2">
    <location>
        <begin position="338"/>
        <end position="431"/>
    </location>
</feature>
<reference key="1">
    <citation type="journal article" date="2003" name="Proc. Natl. Acad. Sci. U.S.A.">
        <title>Complete genome sequence of the marine planctomycete Pirellula sp. strain 1.</title>
        <authorList>
            <person name="Gloeckner F.O."/>
            <person name="Kube M."/>
            <person name="Bauer M."/>
            <person name="Teeling H."/>
            <person name="Lombardot T."/>
            <person name="Ludwig W."/>
            <person name="Gade D."/>
            <person name="Beck A."/>
            <person name="Borzym K."/>
            <person name="Heitmann K."/>
            <person name="Rabus R."/>
            <person name="Schlesner H."/>
            <person name="Amann R."/>
            <person name="Reinhardt R."/>
        </authorList>
    </citation>
    <scope>NUCLEOTIDE SEQUENCE [LARGE SCALE GENOMIC DNA]</scope>
    <source>
        <strain>DSM 10527 / NCIMB 13988 / SH1</strain>
    </source>
</reference>
<gene>
    <name evidence="1" type="primary">rny</name>
    <name type="ordered locus">RB7627</name>
</gene>
<evidence type="ECO:0000255" key="1">
    <source>
        <dbReference type="HAMAP-Rule" id="MF_00335"/>
    </source>
</evidence>
<evidence type="ECO:0000255" key="2">
    <source>
        <dbReference type="PROSITE-ProRule" id="PRU01175"/>
    </source>
</evidence>